<keyword id="KW-0240">DNA-directed RNA polymerase</keyword>
<keyword id="KW-0460">Magnesium</keyword>
<keyword id="KW-0479">Metal-binding</keyword>
<keyword id="KW-0548">Nucleotidyltransferase</keyword>
<keyword id="KW-1185">Reference proteome</keyword>
<keyword id="KW-0804">Transcription</keyword>
<keyword id="KW-0808">Transferase</keyword>
<keyword id="KW-0862">Zinc</keyword>
<evidence type="ECO:0000255" key="1">
    <source>
        <dbReference type="HAMAP-Rule" id="MF_01322"/>
    </source>
</evidence>
<evidence type="ECO:0000256" key="2">
    <source>
        <dbReference type="SAM" id="MobiDB-lite"/>
    </source>
</evidence>
<proteinExistence type="inferred from homology"/>
<dbReference type="EC" id="2.7.7.6" evidence="1"/>
<dbReference type="EMBL" id="CP000316">
    <property type="protein sequence ID" value="ABE46328.1"/>
    <property type="molecule type" value="Genomic_DNA"/>
</dbReference>
<dbReference type="RefSeq" id="WP_011485317.1">
    <property type="nucleotide sequence ID" value="NC_007948.1"/>
</dbReference>
<dbReference type="SMR" id="Q123G4"/>
<dbReference type="STRING" id="296591.Bpro_4441"/>
<dbReference type="KEGG" id="pol:Bpro_4441"/>
<dbReference type="eggNOG" id="COG0086">
    <property type="taxonomic scope" value="Bacteria"/>
</dbReference>
<dbReference type="HOGENOM" id="CLU_000524_3_1_4"/>
<dbReference type="OrthoDB" id="9815296at2"/>
<dbReference type="Proteomes" id="UP000001983">
    <property type="component" value="Chromosome"/>
</dbReference>
<dbReference type="GO" id="GO:0000428">
    <property type="term" value="C:DNA-directed RNA polymerase complex"/>
    <property type="evidence" value="ECO:0007669"/>
    <property type="project" value="UniProtKB-KW"/>
</dbReference>
<dbReference type="GO" id="GO:0003677">
    <property type="term" value="F:DNA binding"/>
    <property type="evidence" value="ECO:0007669"/>
    <property type="project" value="UniProtKB-UniRule"/>
</dbReference>
<dbReference type="GO" id="GO:0003899">
    <property type="term" value="F:DNA-directed RNA polymerase activity"/>
    <property type="evidence" value="ECO:0007669"/>
    <property type="project" value="UniProtKB-UniRule"/>
</dbReference>
<dbReference type="GO" id="GO:0000287">
    <property type="term" value="F:magnesium ion binding"/>
    <property type="evidence" value="ECO:0007669"/>
    <property type="project" value="UniProtKB-UniRule"/>
</dbReference>
<dbReference type="GO" id="GO:0008270">
    <property type="term" value="F:zinc ion binding"/>
    <property type="evidence" value="ECO:0007669"/>
    <property type="project" value="UniProtKB-UniRule"/>
</dbReference>
<dbReference type="GO" id="GO:0006351">
    <property type="term" value="P:DNA-templated transcription"/>
    <property type="evidence" value="ECO:0007669"/>
    <property type="project" value="UniProtKB-UniRule"/>
</dbReference>
<dbReference type="CDD" id="cd02655">
    <property type="entry name" value="RNAP_beta'_C"/>
    <property type="match status" value="1"/>
</dbReference>
<dbReference type="CDD" id="cd01609">
    <property type="entry name" value="RNAP_beta'_N"/>
    <property type="match status" value="1"/>
</dbReference>
<dbReference type="FunFam" id="1.10.132.30:FF:000003">
    <property type="entry name" value="DNA-directed RNA polymerase subunit beta"/>
    <property type="match status" value="1"/>
</dbReference>
<dbReference type="FunFam" id="1.10.150.390:FF:000002">
    <property type="entry name" value="DNA-directed RNA polymerase subunit beta"/>
    <property type="match status" value="1"/>
</dbReference>
<dbReference type="FunFam" id="4.10.860.120:FF:000001">
    <property type="entry name" value="DNA-directed RNA polymerase subunit beta"/>
    <property type="match status" value="1"/>
</dbReference>
<dbReference type="Gene3D" id="1.10.132.30">
    <property type="match status" value="1"/>
</dbReference>
<dbReference type="Gene3D" id="1.10.150.390">
    <property type="match status" value="1"/>
</dbReference>
<dbReference type="Gene3D" id="1.10.1790.20">
    <property type="match status" value="1"/>
</dbReference>
<dbReference type="Gene3D" id="1.10.40.90">
    <property type="match status" value="1"/>
</dbReference>
<dbReference type="Gene3D" id="2.40.40.20">
    <property type="match status" value="1"/>
</dbReference>
<dbReference type="Gene3D" id="2.40.50.100">
    <property type="match status" value="3"/>
</dbReference>
<dbReference type="Gene3D" id="4.10.860.120">
    <property type="entry name" value="RNA polymerase II, clamp domain"/>
    <property type="match status" value="1"/>
</dbReference>
<dbReference type="Gene3D" id="1.10.274.100">
    <property type="entry name" value="RNA polymerase Rpb1, domain 3"/>
    <property type="match status" value="1"/>
</dbReference>
<dbReference type="HAMAP" id="MF_01322">
    <property type="entry name" value="RNApol_bact_RpoC"/>
    <property type="match status" value="1"/>
</dbReference>
<dbReference type="InterPro" id="IPR045867">
    <property type="entry name" value="DNA-dir_RpoC_beta_prime"/>
</dbReference>
<dbReference type="InterPro" id="IPR012754">
    <property type="entry name" value="DNA-dir_RpoC_beta_prime_bact"/>
</dbReference>
<dbReference type="InterPro" id="IPR000722">
    <property type="entry name" value="RNA_pol_asu"/>
</dbReference>
<dbReference type="InterPro" id="IPR006592">
    <property type="entry name" value="RNA_pol_N"/>
</dbReference>
<dbReference type="InterPro" id="IPR007080">
    <property type="entry name" value="RNA_pol_Rpb1_1"/>
</dbReference>
<dbReference type="InterPro" id="IPR007066">
    <property type="entry name" value="RNA_pol_Rpb1_3"/>
</dbReference>
<dbReference type="InterPro" id="IPR042102">
    <property type="entry name" value="RNA_pol_Rpb1_3_sf"/>
</dbReference>
<dbReference type="InterPro" id="IPR007083">
    <property type="entry name" value="RNA_pol_Rpb1_4"/>
</dbReference>
<dbReference type="InterPro" id="IPR007081">
    <property type="entry name" value="RNA_pol_Rpb1_5"/>
</dbReference>
<dbReference type="InterPro" id="IPR044893">
    <property type="entry name" value="RNA_pol_Rpb1_clamp_domain"/>
</dbReference>
<dbReference type="InterPro" id="IPR038120">
    <property type="entry name" value="Rpb1_funnel_sf"/>
</dbReference>
<dbReference type="NCBIfam" id="TIGR02386">
    <property type="entry name" value="rpoC_TIGR"/>
    <property type="match status" value="1"/>
</dbReference>
<dbReference type="PANTHER" id="PTHR19376">
    <property type="entry name" value="DNA-DIRECTED RNA POLYMERASE"/>
    <property type="match status" value="1"/>
</dbReference>
<dbReference type="PANTHER" id="PTHR19376:SF54">
    <property type="entry name" value="DNA-DIRECTED RNA POLYMERASE SUBUNIT BETA"/>
    <property type="match status" value="1"/>
</dbReference>
<dbReference type="Pfam" id="PF04997">
    <property type="entry name" value="RNA_pol_Rpb1_1"/>
    <property type="match status" value="1"/>
</dbReference>
<dbReference type="Pfam" id="PF00623">
    <property type="entry name" value="RNA_pol_Rpb1_2"/>
    <property type="match status" value="2"/>
</dbReference>
<dbReference type="Pfam" id="PF04983">
    <property type="entry name" value="RNA_pol_Rpb1_3"/>
    <property type="match status" value="1"/>
</dbReference>
<dbReference type="Pfam" id="PF05000">
    <property type="entry name" value="RNA_pol_Rpb1_4"/>
    <property type="match status" value="1"/>
</dbReference>
<dbReference type="Pfam" id="PF04998">
    <property type="entry name" value="RNA_pol_Rpb1_5"/>
    <property type="match status" value="1"/>
</dbReference>
<dbReference type="SMART" id="SM00663">
    <property type="entry name" value="RPOLA_N"/>
    <property type="match status" value="1"/>
</dbReference>
<dbReference type="SUPFAM" id="SSF64484">
    <property type="entry name" value="beta and beta-prime subunits of DNA dependent RNA-polymerase"/>
    <property type="match status" value="1"/>
</dbReference>
<accession>Q123G4</accession>
<gene>
    <name evidence="1" type="primary">rpoC</name>
    <name type="ordered locus">Bpro_4441</name>
</gene>
<feature type="chain" id="PRO_0000308875" description="DNA-directed RNA polymerase subunit beta'">
    <location>
        <begin position="1"/>
        <end position="1408"/>
    </location>
</feature>
<feature type="region of interest" description="Disordered" evidence="2">
    <location>
        <begin position="1387"/>
        <end position="1408"/>
    </location>
</feature>
<feature type="compositionally biased region" description="Low complexity" evidence="2">
    <location>
        <begin position="1389"/>
        <end position="1408"/>
    </location>
</feature>
<feature type="binding site" evidence="1">
    <location>
        <position position="70"/>
    </location>
    <ligand>
        <name>Zn(2+)</name>
        <dbReference type="ChEBI" id="CHEBI:29105"/>
        <label>1</label>
    </ligand>
</feature>
<feature type="binding site" evidence="1">
    <location>
        <position position="72"/>
    </location>
    <ligand>
        <name>Zn(2+)</name>
        <dbReference type="ChEBI" id="CHEBI:29105"/>
        <label>1</label>
    </ligand>
</feature>
<feature type="binding site" evidence="1">
    <location>
        <position position="85"/>
    </location>
    <ligand>
        <name>Zn(2+)</name>
        <dbReference type="ChEBI" id="CHEBI:29105"/>
        <label>1</label>
    </ligand>
</feature>
<feature type="binding site" evidence="1">
    <location>
        <position position="88"/>
    </location>
    <ligand>
        <name>Zn(2+)</name>
        <dbReference type="ChEBI" id="CHEBI:29105"/>
        <label>1</label>
    </ligand>
</feature>
<feature type="binding site" evidence="1">
    <location>
        <position position="458"/>
    </location>
    <ligand>
        <name>Mg(2+)</name>
        <dbReference type="ChEBI" id="CHEBI:18420"/>
    </ligand>
</feature>
<feature type="binding site" evidence="1">
    <location>
        <position position="460"/>
    </location>
    <ligand>
        <name>Mg(2+)</name>
        <dbReference type="ChEBI" id="CHEBI:18420"/>
    </ligand>
</feature>
<feature type="binding site" evidence="1">
    <location>
        <position position="462"/>
    </location>
    <ligand>
        <name>Mg(2+)</name>
        <dbReference type="ChEBI" id="CHEBI:18420"/>
    </ligand>
</feature>
<feature type="binding site" evidence="1">
    <location>
        <position position="813"/>
    </location>
    <ligand>
        <name>Zn(2+)</name>
        <dbReference type="ChEBI" id="CHEBI:29105"/>
        <label>2</label>
    </ligand>
</feature>
<feature type="binding site" evidence="1">
    <location>
        <position position="887"/>
    </location>
    <ligand>
        <name>Zn(2+)</name>
        <dbReference type="ChEBI" id="CHEBI:29105"/>
        <label>2</label>
    </ligand>
</feature>
<feature type="binding site" evidence="1">
    <location>
        <position position="894"/>
    </location>
    <ligand>
        <name>Zn(2+)</name>
        <dbReference type="ChEBI" id="CHEBI:29105"/>
        <label>2</label>
    </ligand>
</feature>
<feature type="binding site" evidence="1">
    <location>
        <position position="897"/>
    </location>
    <ligand>
        <name>Zn(2+)</name>
        <dbReference type="ChEBI" id="CHEBI:29105"/>
        <label>2</label>
    </ligand>
</feature>
<reference key="1">
    <citation type="journal article" date="2008" name="Appl. Environ. Microbiol.">
        <title>The genome of Polaromonas sp. strain JS666: insights into the evolution of a hydrocarbon- and xenobiotic-degrading bacterium, and features of relevance to biotechnology.</title>
        <authorList>
            <person name="Mattes T.E."/>
            <person name="Alexander A.K."/>
            <person name="Richardson P.M."/>
            <person name="Munk A.C."/>
            <person name="Han C.S."/>
            <person name="Stothard P."/>
            <person name="Coleman N.V."/>
        </authorList>
    </citation>
    <scope>NUCLEOTIDE SEQUENCE [LARGE SCALE GENOMIC DNA]</scope>
    <source>
        <strain>JS666 / ATCC BAA-500</strain>
    </source>
</reference>
<sequence>MKSLLDLFKQFTPDEHFDAIKIGMASPEKIRSWSFGEVKKPETINYRTFKPERDGLFCAKIFGPIKDYECLCGKYKRLKHRGVICEKCGVEVTQTKVRRERMGHIDLAAPCAHIWFLKSLPSRLGLVLDMTLRDIERVLYFEAYVVTDPGMTPLKKFSIMSEDDYDAKRKEYGDEYVAKMGAEGIKDLLEGLDLDVEIDKLRNDLTGSEIKIKKNAKRLKLMEAFKKSGIKPEWMVLDVLPVLPPDLRPLVPLDGGRFATSDLNDLYRRVINRNSRLRRLLELKAPEIIARNEKRMLQEAVDSLLDNGRRGKAMTGANKRALKSLADMIKGKSGRFRQNLLGKRVDYSGRSVITMGPTLKLHQCGLPKLMALELFKPFIFSRLEAMGIATTIKAAKKEVESGTPVVWDILEEVIKEHPVMLNRAPTLHRLGIQAFEPILIEGKAIQLHPLVCSAFNADFDGDQMAVHVPLSVEAQMEARTLMLASNNILFPANGEPSIVPSQDVVLGLYYTTRDRTNGKGEGLVFSDTGEVRRAFDAGELDLNARISVRLTEWTKNKETGEFIPSTKLWETTGGRALLSEILPKGLPFSNINKALKKKEISKLINVSFRKCGLKETVVFADKLLQSGFRLATKAGISICIDDMLVPKEKHDIISRAQKEVKEIEQQYVSGLVTSGERYNKVVDIWGKSGDEVSKVMMAQLSKEKVIDRHGKEVEQESFNSIYMMADSGARGSAAQIRQVAGMRGLMAKPDGSIIETPITANFREGLNVLEYFISTHGARKGLADTALKTANSGYLTRRLCDVVQDLVVTEDDCGTQEGSLMRAIVEGGEVIESLRERILGRTAVEDVLHPENRSVLAKAGAMLDEDLIDELEAAGVDEVKVRTALTCETRFGLCAKCYGRDLGRGGLINIGEAVGIIAAQSIGEPGTQLTMRTFHIGGAASRAAIASSVEAKSNGVIGFNAPMRYVTNGKGELVVIARSGEIVIHDEHGRERERHKVPYGATLTVKADQTIKAGAILANWDPLTRPIITEFAGKVLFENVEEGVTVAKQVDDVTGLSTLVVIDPKRRGATKVIRPQVKLIDATGNEVKIPGTDHSVTIGFQVGALVQVRDGQDVGPGEVLARIPVEGQKTRDITGGLPRVAELFEARTPKDKGTLAEMTGTVSFGKETKGKVRLQITDPDGKVWEDLVPKEKNILVHEGQVVNKGESIVDGPADPQDILRLLGMEELARYIVDEVQDVYRLQGVKINDKHIEVIVRQMLRRVVVENVGDSSYIAGEQVERSAMLDANDALRAEGKIPATFSNLLLGITKASLSTDSFISAASFQETTRVLTEAAIMGKRDELRGLKENVIVGRLIPAGTGMAYHEARKAKDLMDDAERRAIAEAEAAELEAATATAPADAGGDSPATE</sequence>
<organism>
    <name type="scientific">Polaromonas sp. (strain JS666 / ATCC BAA-500)</name>
    <dbReference type="NCBI Taxonomy" id="296591"/>
    <lineage>
        <taxon>Bacteria</taxon>
        <taxon>Pseudomonadati</taxon>
        <taxon>Pseudomonadota</taxon>
        <taxon>Betaproteobacteria</taxon>
        <taxon>Burkholderiales</taxon>
        <taxon>Comamonadaceae</taxon>
        <taxon>Polaromonas</taxon>
    </lineage>
</organism>
<protein>
    <recommendedName>
        <fullName evidence="1">DNA-directed RNA polymerase subunit beta'</fullName>
        <shortName evidence="1">RNAP subunit beta'</shortName>
        <ecNumber evidence="1">2.7.7.6</ecNumber>
    </recommendedName>
    <alternativeName>
        <fullName evidence="1">RNA polymerase subunit beta'</fullName>
    </alternativeName>
    <alternativeName>
        <fullName evidence="1">Transcriptase subunit beta'</fullName>
    </alternativeName>
</protein>
<name>RPOC_POLSJ</name>
<comment type="function">
    <text evidence="1">DNA-dependent RNA polymerase catalyzes the transcription of DNA into RNA using the four ribonucleoside triphosphates as substrates.</text>
</comment>
<comment type="catalytic activity">
    <reaction evidence="1">
        <text>RNA(n) + a ribonucleoside 5'-triphosphate = RNA(n+1) + diphosphate</text>
        <dbReference type="Rhea" id="RHEA:21248"/>
        <dbReference type="Rhea" id="RHEA-COMP:14527"/>
        <dbReference type="Rhea" id="RHEA-COMP:17342"/>
        <dbReference type="ChEBI" id="CHEBI:33019"/>
        <dbReference type="ChEBI" id="CHEBI:61557"/>
        <dbReference type="ChEBI" id="CHEBI:140395"/>
        <dbReference type="EC" id="2.7.7.6"/>
    </reaction>
</comment>
<comment type="cofactor">
    <cofactor evidence="1">
        <name>Mg(2+)</name>
        <dbReference type="ChEBI" id="CHEBI:18420"/>
    </cofactor>
    <text evidence="1">Binds 1 Mg(2+) ion per subunit.</text>
</comment>
<comment type="cofactor">
    <cofactor evidence="1">
        <name>Zn(2+)</name>
        <dbReference type="ChEBI" id="CHEBI:29105"/>
    </cofactor>
    <text evidence="1">Binds 2 Zn(2+) ions per subunit.</text>
</comment>
<comment type="subunit">
    <text evidence="1">The RNAP catalytic core consists of 2 alpha, 1 beta, 1 beta' and 1 omega subunit. When a sigma factor is associated with the core the holoenzyme is formed, which can initiate transcription.</text>
</comment>
<comment type="similarity">
    <text evidence="1">Belongs to the RNA polymerase beta' chain family.</text>
</comment>